<name>MURA2_OCEIH</name>
<gene>
    <name evidence="1" type="primary">murA2</name>
    <name type="synonym">murZ</name>
    <name type="ordered locus">OB3003</name>
</gene>
<sequence length="428" mass="46037">MQKLLIEGGHDLTGQVRISGAKNSAVALLPAAILADSAVTIEGLPEISDVDTLGDLLEEIGGSVSRDGQDITIHPEKMMAMPLPNGKVKKLRASYYFMGAMLGKFNKAVIGLPGGCFLGPRPIDQHIKGFEALGAEVTNEQGAIYLRANELRGARIYLDVVSVGATINIMLAAVKAKGRTTIENAAKEPEIIDVATLLTNMGAKIKGVGTDVIRIDGVPSLHGCRHTIIPDRIEAGTYAIAAAAKGKEVIIDNVIPQHLESLIAKLREMDVTIEESDEQLYIARNRPLKSVDIKTLVYPGFPTDLQQPFTSLLTQATHSGVITDTIYSARLKHIDELRRMNAVIKVEGGSVIVSGPVQLEGARVKASDLRAGASLIIAGLLADGITEITGLDHIDRGYERLTEKLSSLGANIWREEMTDIEIMQDQNM</sequence>
<evidence type="ECO:0000255" key="1">
    <source>
        <dbReference type="HAMAP-Rule" id="MF_00111"/>
    </source>
</evidence>
<keyword id="KW-0131">Cell cycle</keyword>
<keyword id="KW-0132">Cell division</keyword>
<keyword id="KW-0133">Cell shape</keyword>
<keyword id="KW-0961">Cell wall biogenesis/degradation</keyword>
<keyword id="KW-0963">Cytoplasm</keyword>
<keyword id="KW-0573">Peptidoglycan synthesis</keyword>
<keyword id="KW-0670">Pyruvate</keyword>
<keyword id="KW-1185">Reference proteome</keyword>
<keyword id="KW-0808">Transferase</keyword>
<proteinExistence type="inferred from homology"/>
<organism>
    <name type="scientific">Oceanobacillus iheyensis (strain DSM 14371 / CIP 107618 / JCM 11309 / KCTC 3954 / HTE831)</name>
    <dbReference type="NCBI Taxonomy" id="221109"/>
    <lineage>
        <taxon>Bacteria</taxon>
        <taxon>Bacillati</taxon>
        <taxon>Bacillota</taxon>
        <taxon>Bacilli</taxon>
        <taxon>Bacillales</taxon>
        <taxon>Bacillaceae</taxon>
        <taxon>Oceanobacillus</taxon>
    </lineage>
</organism>
<feature type="chain" id="PRO_0000231231" description="UDP-N-acetylglucosamine 1-carboxyvinyltransferase 2">
    <location>
        <begin position="1"/>
        <end position="428"/>
    </location>
</feature>
<feature type="active site" description="Proton donor" evidence="1">
    <location>
        <position position="116"/>
    </location>
</feature>
<feature type="binding site" evidence="1">
    <location>
        <begin position="22"/>
        <end position="23"/>
    </location>
    <ligand>
        <name>phosphoenolpyruvate</name>
        <dbReference type="ChEBI" id="CHEBI:58702"/>
    </ligand>
</feature>
<feature type="binding site" evidence="1">
    <location>
        <position position="92"/>
    </location>
    <ligand>
        <name>UDP-N-acetyl-alpha-D-glucosamine</name>
        <dbReference type="ChEBI" id="CHEBI:57705"/>
    </ligand>
</feature>
<feature type="binding site" evidence="1">
    <location>
        <begin position="121"/>
        <end position="125"/>
    </location>
    <ligand>
        <name>UDP-N-acetyl-alpha-D-glucosamine</name>
        <dbReference type="ChEBI" id="CHEBI:57705"/>
    </ligand>
</feature>
<feature type="binding site" evidence="1">
    <location>
        <position position="304"/>
    </location>
    <ligand>
        <name>UDP-N-acetyl-alpha-D-glucosamine</name>
        <dbReference type="ChEBI" id="CHEBI:57705"/>
    </ligand>
</feature>
<feature type="binding site" evidence="1">
    <location>
        <position position="326"/>
    </location>
    <ligand>
        <name>UDP-N-acetyl-alpha-D-glucosamine</name>
        <dbReference type="ChEBI" id="CHEBI:57705"/>
    </ligand>
</feature>
<feature type="modified residue" description="2-(S-cysteinyl)pyruvic acid O-phosphothioketal" evidence="1">
    <location>
        <position position="116"/>
    </location>
</feature>
<dbReference type="EC" id="2.5.1.7" evidence="1"/>
<dbReference type="EMBL" id="BA000028">
    <property type="protein sequence ID" value="BAC14959.1"/>
    <property type="molecule type" value="Genomic_DNA"/>
</dbReference>
<dbReference type="RefSeq" id="WP_011067399.1">
    <property type="nucleotide sequence ID" value="NC_004193.1"/>
</dbReference>
<dbReference type="SMR" id="Q8EM55"/>
<dbReference type="STRING" id="221109.gene:10735255"/>
<dbReference type="KEGG" id="oih:OB3003"/>
<dbReference type="eggNOG" id="COG0766">
    <property type="taxonomic scope" value="Bacteria"/>
</dbReference>
<dbReference type="HOGENOM" id="CLU_027387_0_0_9"/>
<dbReference type="OrthoDB" id="9803760at2"/>
<dbReference type="PhylomeDB" id="Q8EM55"/>
<dbReference type="UniPathway" id="UPA00219"/>
<dbReference type="Proteomes" id="UP000000822">
    <property type="component" value="Chromosome"/>
</dbReference>
<dbReference type="GO" id="GO:0005737">
    <property type="term" value="C:cytoplasm"/>
    <property type="evidence" value="ECO:0007669"/>
    <property type="project" value="UniProtKB-SubCell"/>
</dbReference>
<dbReference type="GO" id="GO:0008760">
    <property type="term" value="F:UDP-N-acetylglucosamine 1-carboxyvinyltransferase activity"/>
    <property type="evidence" value="ECO:0007669"/>
    <property type="project" value="UniProtKB-UniRule"/>
</dbReference>
<dbReference type="GO" id="GO:0051301">
    <property type="term" value="P:cell division"/>
    <property type="evidence" value="ECO:0007669"/>
    <property type="project" value="UniProtKB-KW"/>
</dbReference>
<dbReference type="GO" id="GO:0071555">
    <property type="term" value="P:cell wall organization"/>
    <property type="evidence" value="ECO:0007669"/>
    <property type="project" value="UniProtKB-KW"/>
</dbReference>
<dbReference type="GO" id="GO:0009252">
    <property type="term" value="P:peptidoglycan biosynthetic process"/>
    <property type="evidence" value="ECO:0007669"/>
    <property type="project" value="UniProtKB-UniRule"/>
</dbReference>
<dbReference type="GO" id="GO:0008360">
    <property type="term" value="P:regulation of cell shape"/>
    <property type="evidence" value="ECO:0007669"/>
    <property type="project" value="UniProtKB-KW"/>
</dbReference>
<dbReference type="GO" id="GO:0019277">
    <property type="term" value="P:UDP-N-acetylgalactosamine biosynthetic process"/>
    <property type="evidence" value="ECO:0007669"/>
    <property type="project" value="InterPro"/>
</dbReference>
<dbReference type="CDD" id="cd01555">
    <property type="entry name" value="UdpNAET"/>
    <property type="match status" value="1"/>
</dbReference>
<dbReference type="FunFam" id="3.65.10.10:FF:000001">
    <property type="entry name" value="UDP-N-acetylglucosamine 1-carboxyvinyltransferase"/>
    <property type="match status" value="1"/>
</dbReference>
<dbReference type="Gene3D" id="3.65.10.10">
    <property type="entry name" value="Enolpyruvate transferase domain"/>
    <property type="match status" value="2"/>
</dbReference>
<dbReference type="HAMAP" id="MF_00111">
    <property type="entry name" value="MurA"/>
    <property type="match status" value="1"/>
</dbReference>
<dbReference type="InterPro" id="IPR001986">
    <property type="entry name" value="Enolpyruvate_Tfrase_dom"/>
</dbReference>
<dbReference type="InterPro" id="IPR036968">
    <property type="entry name" value="Enolpyruvate_Tfrase_sf"/>
</dbReference>
<dbReference type="InterPro" id="IPR050068">
    <property type="entry name" value="MurA_subfamily"/>
</dbReference>
<dbReference type="InterPro" id="IPR013792">
    <property type="entry name" value="RNA3'P_cycl/enolpyr_Trfase_a/b"/>
</dbReference>
<dbReference type="InterPro" id="IPR005750">
    <property type="entry name" value="UDP_GlcNAc_COvinyl_MurA"/>
</dbReference>
<dbReference type="NCBIfam" id="TIGR01072">
    <property type="entry name" value="murA"/>
    <property type="match status" value="1"/>
</dbReference>
<dbReference type="NCBIfam" id="NF006873">
    <property type="entry name" value="PRK09369.1"/>
    <property type="match status" value="1"/>
</dbReference>
<dbReference type="NCBIfam" id="NF009470">
    <property type="entry name" value="PRK12830.1"/>
    <property type="match status" value="1"/>
</dbReference>
<dbReference type="PANTHER" id="PTHR43783">
    <property type="entry name" value="UDP-N-ACETYLGLUCOSAMINE 1-CARBOXYVINYLTRANSFERASE"/>
    <property type="match status" value="1"/>
</dbReference>
<dbReference type="PANTHER" id="PTHR43783:SF2">
    <property type="entry name" value="UDP-N-ACETYLGLUCOSAMINE 1-CARBOXYVINYLTRANSFERASE 2"/>
    <property type="match status" value="1"/>
</dbReference>
<dbReference type="Pfam" id="PF00275">
    <property type="entry name" value="EPSP_synthase"/>
    <property type="match status" value="1"/>
</dbReference>
<dbReference type="SUPFAM" id="SSF55205">
    <property type="entry name" value="EPT/RTPC-like"/>
    <property type="match status" value="1"/>
</dbReference>
<comment type="function">
    <text evidence="1">Cell wall formation. Adds enolpyruvyl to UDP-N-acetylglucosamine.</text>
</comment>
<comment type="catalytic activity">
    <reaction evidence="1">
        <text>phosphoenolpyruvate + UDP-N-acetyl-alpha-D-glucosamine = UDP-N-acetyl-3-O-(1-carboxyvinyl)-alpha-D-glucosamine + phosphate</text>
        <dbReference type="Rhea" id="RHEA:18681"/>
        <dbReference type="ChEBI" id="CHEBI:43474"/>
        <dbReference type="ChEBI" id="CHEBI:57705"/>
        <dbReference type="ChEBI" id="CHEBI:58702"/>
        <dbReference type="ChEBI" id="CHEBI:68483"/>
        <dbReference type="EC" id="2.5.1.7"/>
    </reaction>
</comment>
<comment type="pathway">
    <text evidence="1">Cell wall biogenesis; peptidoglycan biosynthesis.</text>
</comment>
<comment type="subcellular location">
    <subcellularLocation>
        <location evidence="1">Cytoplasm</location>
    </subcellularLocation>
</comment>
<comment type="similarity">
    <text evidence="1">Belongs to the EPSP synthase family. MurA subfamily.</text>
</comment>
<accession>Q8EM55</accession>
<reference key="1">
    <citation type="journal article" date="2002" name="Nucleic Acids Res.">
        <title>Genome sequence of Oceanobacillus iheyensis isolated from the Iheya Ridge and its unexpected adaptive capabilities to extreme environments.</title>
        <authorList>
            <person name="Takami H."/>
            <person name="Takaki Y."/>
            <person name="Uchiyama I."/>
        </authorList>
    </citation>
    <scope>NUCLEOTIDE SEQUENCE [LARGE SCALE GENOMIC DNA]</scope>
    <source>
        <strain>DSM 14371 / CIP 107618 / JCM 11309 / KCTC 3954 / HTE831</strain>
    </source>
</reference>
<protein>
    <recommendedName>
        <fullName evidence="1">UDP-N-acetylglucosamine 1-carboxyvinyltransferase 2</fullName>
        <ecNumber evidence="1">2.5.1.7</ecNumber>
    </recommendedName>
    <alternativeName>
        <fullName evidence="1">Enoylpyruvate transferase 2</fullName>
    </alternativeName>
    <alternativeName>
        <fullName evidence="1">UDP-N-acetylglucosamine enolpyruvyl transferase 2</fullName>
        <shortName evidence="1">EPT 2</shortName>
    </alternativeName>
</protein>